<comment type="function">
    <text evidence="1 3 4">Completely wraps the viral circular dsDNA genome to form a nucleoprotein filament (PubMed:31636205). These interactions between the viral genome and the nucleocapsid proteins probably maintain the DNA in A-form (Probable). This certainly protects the viral DNA under conditions such as the extreme desiccation of its host (Probable).</text>
</comment>
<comment type="subunit">
    <text evidence="1">Homodimer.</text>
</comment>
<comment type="subcellular location">
    <subcellularLocation>
        <location evidence="1">Virion</location>
    </subcellularLocation>
</comment>
<sequence length="78" mass="8429">MATLTDVRNALQNAWTDDMKKAVKNAYRNAEKRASQGGNYAKCLEQASMQGTPYSLAAKKCAIENNLASTLSGLWGTS</sequence>
<gene>
    <name evidence="2" type="ORF">ORF45</name>
</gene>
<name>NCAP_SPV1</name>
<reference key="1">
    <citation type="journal article" date="2017" name="J. Virol.">
        <title>A novel type of polyhedral viruses infecting hyperthermophilic archaea.</title>
        <authorList>
            <person name="Liu Y."/>
            <person name="Ishino S."/>
            <person name="Ishino Y."/>
            <person name="Pehau-Arnaudet G."/>
            <person name="Krupovic M."/>
            <person name="Prangishvili D."/>
        </authorList>
    </citation>
    <scope>NUCLEOTIDE SEQUENCE [LARGE SCALE GENOMIC DNA]</scope>
    <source>
        <strain evidence="5">S14</strain>
    </source>
</reference>
<reference key="2">
    <citation type="journal article" date="2019" name="Proc. Natl. Acad. Sci. U.S.A.">
        <title>A packing for A-form DNA in an icosahedral virus.</title>
        <authorList>
            <person name="Wang F."/>
            <person name="Liu Y."/>
            <person name="Su Z."/>
            <person name="Osinski T."/>
            <person name="de Oliveira G.A.P."/>
            <person name="Conway J.F."/>
            <person name="Schouten S."/>
            <person name="Krupovic M."/>
            <person name="Prangishvili D."/>
            <person name="Egelman E.H."/>
        </authorList>
    </citation>
    <scope>FUNCTION</scope>
    <scope>SUBUNIT</scope>
    <scope>SUBCELLULAR LOCATION</scope>
</reference>
<organismHost>
    <name type="scientific">Sulfolobus</name>
    <dbReference type="NCBI Taxonomy" id="2284"/>
</organismHost>
<dbReference type="EMBL" id="KY780159">
    <property type="protein sequence ID" value="ARM37827.1"/>
    <property type="molecule type" value="Genomic_DNA"/>
</dbReference>
<dbReference type="SMR" id="A0A1W6I186"/>
<dbReference type="Proteomes" id="UP000224527">
    <property type="component" value="Segment"/>
</dbReference>
<dbReference type="GO" id="GO:0019013">
    <property type="term" value="C:viral nucleocapsid"/>
    <property type="evidence" value="ECO:0000314"/>
    <property type="project" value="UniProtKB"/>
</dbReference>
<dbReference type="GO" id="GO:0003677">
    <property type="term" value="F:DNA binding"/>
    <property type="evidence" value="ECO:0000314"/>
    <property type="project" value="UniProtKB"/>
</dbReference>
<keyword id="KW-0238">DNA-binding</keyword>
<keyword id="KW-1185">Reference proteome</keyword>
<keyword id="KW-0543">Viral nucleoprotein</keyword>
<keyword id="KW-0946">Virion</keyword>
<accession>A0A1W6I186</accession>
<proteinExistence type="evidence at protein level"/>
<protein>
    <recommendedName>
        <fullName evidence="5">Nucleocapsid VP1</fullName>
    </recommendedName>
</protein>
<organism>
    <name type="scientific">Sulfolobus polyhedral virus 1</name>
    <name type="common">SPV1</name>
    <dbReference type="NCBI Taxonomy" id="1982658"/>
    <lineage>
        <taxon>Viruses</taxon>
        <taxon>Viruses incertae sedis</taxon>
        <taxon>Portogloboviridae</taxon>
        <taxon>Alphaportoglobovirus</taxon>
        <taxon>Sulfolobus alphaportoglobovirus 1</taxon>
    </lineage>
</organism>
<evidence type="ECO:0000269" key="1">
    <source>
    </source>
</evidence>
<evidence type="ECO:0000303" key="2">
    <source>
    </source>
</evidence>
<evidence type="ECO:0000305" key="3"/>
<evidence type="ECO:0000305" key="4">
    <source>
    </source>
</evidence>
<evidence type="ECO:0000312" key="5">
    <source>
        <dbReference type="EMBL" id="ARM37827.1"/>
    </source>
</evidence>
<feature type="chain" id="PRO_0000453897" description="Nucleocapsid VP1">
    <location>
        <begin position="1"/>
        <end position="78"/>
    </location>
</feature>